<keyword id="KW-0963">Cytoplasm</keyword>
<keyword id="KW-0238">DNA-binding</keyword>
<evidence type="ECO:0000255" key="1">
    <source>
        <dbReference type="HAMAP-Rule" id="MF_00274"/>
    </source>
</evidence>
<sequence length="100" mass="11018">MNQRQLMQMAQQMQRQMQKVQEELAATIVEGTAGGGAIVVKMNGHREVQSITISPEVVDPNDVDMLQDLLLVAINDASRKAQQLAEERMQPLTGGLKGLF</sequence>
<name>Y3200_CHLAD</name>
<dbReference type="EMBL" id="CP001337">
    <property type="protein sequence ID" value="ACL26058.1"/>
    <property type="molecule type" value="Genomic_DNA"/>
</dbReference>
<dbReference type="RefSeq" id="WP_015941905.1">
    <property type="nucleotide sequence ID" value="NC_011831.1"/>
</dbReference>
<dbReference type="SMR" id="B8G7M3"/>
<dbReference type="STRING" id="326427.Cagg_3200"/>
<dbReference type="KEGG" id="cag:Cagg_3200"/>
<dbReference type="eggNOG" id="COG0718">
    <property type="taxonomic scope" value="Bacteria"/>
</dbReference>
<dbReference type="HOGENOM" id="CLU_140930_2_2_0"/>
<dbReference type="OrthoDB" id="9795263at2"/>
<dbReference type="Proteomes" id="UP000002508">
    <property type="component" value="Chromosome"/>
</dbReference>
<dbReference type="GO" id="GO:0043590">
    <property type="term" value="C:bacterial nucleoid"/>
    <property type="evidence" value="ECO:0007669"/>
    <property type="project" value="UniProtKB-UniRule"/>
</dbReference>
<dbReference type="GO" id="GO:0005829">
    <property type="term" value="C:cytosol"/>
    <property type="evidence" value="ECO:0007669"/>
    <property type="project" value="TreeGrafter"/>
</dbReference>
<dbReference type="GO" id="GO:0003677">
    <property type="term" value="F:DNA binding"/>
    <property type="evidence" value="ECO:0007669"/>
    <property type="project" value="UniProtKB-UniRule"/>
</dbReference>
<dbReference type="Gene3D" id="3.30.1310.10">
    <property type="entry name" value="Nucleoid-associated protein YbaB-like domain"/>
    <property type="match status" value="1"/>
</dbReference>
<dbReference type="HAMAP" id="MF_00274">
    <property type="entry name" value="DNA_YbaB_EbfC"/>
    <property type="match status" value="1"/>
</dbReference>
<dbReference type="InterPro" id="IPR036894">
    <property type="entry name" value="YbaB-like_sf"/>
</dbReference>
<dbReference type="InterPro" id="IPR004401">
    <property type="entry name" value="YbaB/EbfC"/>
</dbReference>
<dbReference type="NCBIfam" id="TIGR00103">
    <property type="entry name" value="DNA_YbaB_EbfC"/>
    <property type="match status" value="1"/>
</dbReference>
<dbReference type="PANTHER" id="PTHR33449">
    <property type="entry name" value="NUCLEOID-ASSOCIATED PROTEIN YBAB"/>
    <property type="match status" value="1"/>
</dbReference>
<dbReference type="PANTHER" id="PTHR33449:SF1">
    <property type="entry name" value="NUCLEOID-ASSOCIATED PROTEIN YBAB"/>
    <property type="match status" value="1"/>
</dbReference>
<dbReference type="Pfam" id="PF02575">
    <property type="entry name" value="YbaB_DNA_bd"/>
    <property type="match status" value="1"/>
</dbReference>
<dbReference type="PIRSF" id="PIRSF004555">
    <property type="entry name" value="UCP004555"/>
    <property type="match status" value="1"/>
</dbReference>
<dbReference type="SUPFAM" id="SSF82607">
    <property type="entry name" value="YbaB-like"/>
    <property type="match status" value="1"/>
</dbReference>
<proteinExistence type="inferred from homology"/>
<organism>
    <name type="scientific">Chloroflexus aggregans (strain MD-66 / DSM 9485)</name>
    <dbReference type="NCBI Taxonomy" id="326427"/>
    <lineage>
        <taxon>Bacteria</taxon>
        <taxon>Bacillati</taxon>
        <taxon>Chloroflexota</taxon>
        <taxon>Chloroflexia</taxon>
        <taxon>Chloroflexales</taxon>
        <taxon>Chloroflexineae</taxon>
        <taxon>Chloroflexaceae</taxon>
        <taxon>Chloroflexus</taxon>
    </lineage>
</organism>
<reference key="1">
    <citation type="submission" date="2008-12" db="EMBL/GenBank/DDBJ databases">
        <title>Complete sequence of Chloroflexus aggregans DSM 9485.</title>
        <authorList>
            <consortium name="US DOE Joint Genome Institute"/>
            <person name="Lucas S."/>
            <person name="Copeland A."/>
            <person name="Lapidus A."/>
            <person name="Glavina del Rio T."/>
            <person name="Dalin E."/>
            <person name="Tice H."/>
            <person name="Pitluck S."/>
            <person name="Foster B."/>
            <person name="Larimer F."/>
            <person name="Land M."/>
            <person name="Hauser L."/>
            <person name="Kyrpides N."/>
            <person name="Mikhailova N."/>
            <person name="Bryant D.A."/>
            <person name="Richardson P."/>
        </authorList>
    </citation>
    <scope>NUCLEOTIDE SEQUENCE [LARGE SCALE GENOMIC DNA]</scope>
    <source>
        <strain>MD-66 / DSM 9485</strain>
    </source>
</reference>
<comment type="function">
    <text evidence="1">Binds to DNA and alters its conformation. May be involved in regulation of gene expression, nucleoid organization and DNA protection.</text>
</comment>
<comment type="subunit">
    <text evidence="1">Homodimer.</text>
</comment>
<comment type="subcellular location">
    <subcellularLocation>
        <location evidence="1">Cytoplasm</location>
        <location evidence="1">Nucleoid</location>
    </subcellularLocation>
</comment>
<comment type="similarity">
    <text evidence="1">Belongs to the YbaB/EbfC family.</text>
</comment>
<gene>
    <name type="ordered locus">Cagg_3200</name>
</gene>
<protein>
    <recommendedName>
        <fullName evidence="1">Nucleoid-associated protein Cagg_3200</fullName>
    </recommendedName>
</protein>
<feature type="chain" id="PRO_1000197649" description="Nucleoid-associated protein Cagg_3200">
    <location>
        <begin position="1"/>
        <end position="100"/>
    </location>
</feature>
<accession>B8G7M3</accession>